<protein>
    <recommendedName>
        <fullName>Taste receptor type 2 member 50</fullName>
        <shortName>T2R50</shortName>
    </recommendedName>
</protein>
<accession>Q645T6</accession>
<organism>
    <name type="scientific">Macaca mulatta</name>
    <name type="common">Rhesus macaque</name>
    <dbReference type="NCBI Taxonomy" id="9544"/>
    <lineage>
        <taxon>Eukaryota</taxon>
        <taxon>Metazoa</taxon>
        <taxon>Chordata</taxon>
        <taxon>Craniata</taxon>
        <taxon>Vertebrata</taxon>
        <taxon>Euteleostomi</taxon>
        <taxon>Mammalia</taxon>
        <taxon>Eutheria</taxon>
        <taxon>Euarchontoglires</taxon>
        <taxon>Primates</taxon>
        <taxon>Haplorrhini</taxon>
        <taxon>Catarrhini</taxon>
        <taxon>Cercopithecidae</taxon>
        <taxon>Cercopithecinae</taxon>
        <taxon>Macaca</taxon>
    </lineage>
</organism>
<reference key="1">
    <citation type="journal article" date="2005" name="Mol. Biol. Evol.">
        <title>Evolution of bitter taste receptors in humans and apes.</title>
        <authorList>
            <person name="Fischer A."/>
            <person name="Gilad Y."/>
            <person name="Man O."/>
            <person name="Paeaebo S."/>
        </authorList>
    </citation>
    <scope>NUCLEOTIDE SEQUENCE [GENOMIC DNA]</scope>
</reference>
<evidence type="ECO:0000250" key="1"/>
<evidence type="ECO:0000255" key="2"/>
<evidence type="ECO:0000305" key="3"/>
<feature type="chain" id="PRO_0000082338" description="Taste receptor type 2 member 50">
    <location>
        <begin position="1"/>
        <end position="299"/>
    </location>
</feature>
<feature type="topological domain" description="Extracellular" evidence="2">
    <location>
        <position position="1"/>
    </location>
</feature>
<feature type="transmembrane region" description="Helical; Name=1" evidence="2">
    <location>
        <begin position="2"/>
        <end position="22"/>
    </location>
</feature>
<feature type="topological domain" description="Cytoplasmic" evidence="2">
    <location>
        <begin position="23"/>
        <end position="55"/>
    </location>
</feature>
<feature type="transmembrane region" description="Helical; Name=2" evidence="2">
    <location>
        <begin position="56"/>
        <end position="76"/>
    </location>
</feature>
<feature type="topological domain" description="Extracellular" evidence="2">
    <location>
        <begin position="77"/>
        <end position="87"/>
    </location>
</feature>
<feature type="transmembrane region" description="Helical; Name=3" evidence="2">
    <location>
        <begin position="88"/>
        <end position="108"/>
    </location>
</feature>
<feature type="topological domain" description="Cytoplasmic" evidence="2">
    <location>
        <begin position="109"/>
        <end position="126"/>
    </location>
</feature>
<feature type="transmembrane region" description="Helical; Name=4" evidence="2">
    <location>
        <begin position="127"/>
        <end position="147"/>
    </location>
</feature>
<feature type="topological domain" description="Extracellular" evidence="2">
    <location>
        <begin position="148"/>
        <end position="181"/>
    </location>
</feature>
<feature type="transmembrane region" description="Helical; Name=5" evidence="2">
    <location>
        <begin position="182"/>
        <end position="202"/>
    </location>
</feature>
<feature type="topological domain" description="Cytoplasmic" evidence="2">
    <location>
        <begin position="203"/>
        <end position="229"/>
    </location>
</feature>
<feature type="transmembrane region" description="Helical; Name=6" evidence="2">
    <location>
        <begin position="230"/>
        <end position="250"/>
    </location>
</feature>
<feature type="topological domain" description="Extracellular" evidence="2">
    <location>
        <begin position="251"/>
        <end position="259"/>
    </location>
</feature>
<feature type="transmembrane region" description="Helical; Name=7" evidence="2">
    <location>
        <begin position="260"/>
        <end position="280"/>
    </location>
</feature>
<feature type="topological domain" description="Cytoplasmic" evidence="2">
    <location>
        <begin position="281"/>
        <end position="299"/>
    </location>
</feature>
<feature type="glycosylation site" description="N-linked (GlcNAc...) asparagine" evidence="2">
    <location>
        <position position="161"/>
    </location>
</feature>
<dbReference type="EMBL" id="AY725001">
    <property type="protein sequence ID" value="AAU21183.1"/>
    <property type="molecule type" value="Genomic_DNA"/>
</dbReference>
<dbReference type="SMR" id="Q645T6"/>
<dbReference type="FunCoup" id="Q645T6">
    <property type="interactions" value="203"/>
</dbReference>
<dbReference type="GlyCosmos" id="Q645T6">
    <property type="glycosylation" value="1 site, No reported glycans"/>
</dbReference>
<dbReference type="PaxDb" id="9544-ENSMMUP00000027636"/>
<dbReference type="eggNOG" id="ENOG502TE6U">
    <property type="taxonomic scope" value="Eukaryota"/>
</dbReference>
<dbReference type="InParanoid" id="Q645T6"/>
<dbReference type="Proteomes" id="UP000006718">
    <property type="component" value="Unassembled WGS sequence"/>
</dbReference>
<dbReference type="GO" id="GO:0016020">
    <property type="term" value="C:membrane"/>
    <property type="evidence" value="ECO:0000318"/>
    <property type="project" value="GO_Central"/>
</dbReference>
<dbReference type="GO" id="GO:0005886">
    <property type="term" value="C:plasma membrane"/>
    <property type="evidence" value="ECO:0007669"/>
    <property type="project" value="UniProtKB-ARBA"/>
</dbReference>
<dbReference type="GO" id="GO:0033038">
    <property type="term" value="F:bitter taste receptor activity"/>
    <property type="evidence" value="ECO:0000318"/>
    <property type="project" value="GO_Central"/>
</dbReference>
<dbReference type="GO" id="GO:0004930">
    <property type="term" value="F:G protein-coupled receptor activity"/>
    <property type="evidence" value="ECO:0007669"/>
    <property type="project" value="UniProtKB-KW"/>
</dbReference>
<dbReference type="GO" id="GO:0001580">
    <property type="term" value="P:detection of chemical stimulus involved in sensory perception of bitter taste"/>
    <property type="evidence" value="ECO:0000318"/>
    <property type="project" value="GO_Central"/>
</dbReference>
<dbReference type="CDD" id="cd15027">
    <property type="entry name" value="7tm_TAS2R43-like"/>
    <property type="match status" value="1"/>
</dbReference>
<dbReference type="FunFam" id="1.20.1070.10:FF:000042">
    <property type="entry name" value="Taste receptor type 2 member 7"/>
    <property type="match status" value="1"/>
</dbReference>
<dbReference type="Gene3D" id="1.20.1070.10">
    <property type="entry name" value="Rhodopsin 7-helix transmembrane proteins"/>
    <property type="match status" value="1"/>
</dbReference>
<dbReference type="InterPro" id="IPR007960">
    <property type="entry name" value="TAS2R"/>
</dbReference>
<dbReference type="PANTHER" id="PTHR11394">
    <property type="entry name" value="TASTE RECEPTOR TYPE 2"/>
    <property type="match status" value="1"/>
</dbReference>
<dbReference type="PANTHER" id="PTHR11394:SF43">
    <property type="entry name" value="TASTE RECEPTOR TYPE 2 MEMBER 50"/>
    <property type="match status" value="1"/>
</dbReference>
<dbReference type="Pfam" id="PF05296">
    <property type="entry name" value="TAS2R"/>
    <property type="match status" value="1"/>
</dbReference>
<dbReference type="SUPFAM" id="SSF81321">
    <property type="entry name" value="Family A G protein-coupled receptor-like"/>
    <property type="match status" value="1"/>
</dbReference>
<comment type="function">
    <text evidence="1">Receptor that may play a role in the perception of bitterness and is gustducin-linked. May play a role in sensing the chemical composition of the gastrointestinal content. The activity of this receptor may stimulate alpha gustducin, mediate PLC-beta-2 activation and lead to the gating of TRPM5 (By similarity).</text>
</comment>
<comment type="subcellular location">
    <subcellularLocation>
        <location>Membrane</location>
        <topology>Multi-pass membrane protein</topology>
    </subcellularLocation>
</comment>
<comment type="miscellaneous">
    <text>Most taste cells may be activated by a limited number of bitter compounds; individual taste cells can discriminate among bitter stimuli.</text>
</comment>
<comment type="similarity">
    <text evidence="3">Belongs to the G-protein coupled receptor T2R family.</text>
</comment>
<keyword id="KW-0297">G-protein coupled receptor</keyword>
<keyword id="KW-0325">Glycoprotein</keyword>
<keyword id="KW-0472">Membrane</keyword>
<keyword id="KW-0675">Receptor</keyword>
<keyword id="KW-1185">Reference proteome</keyword>
<keyword id="KW-0716">Sensory transduction</keyword>
<keyword id="KW-0919">Taste</keyword>
<keyword id="KW-0807">Transducer</keyword>
<keyword id="KW-0812">Transmembrane</keyword>
<keyword id="KW-1133">Transmembrane helix</keyword>
<name>T2R50_MACMU</name>
<proteinExistence type="inferred from homology"/>
<gene>
    <name type="primary">TAS2R50</name>
</gene>
<sequence>MIPFLHIFFSVLILVLFVLGNFANGFIALVNFIDWVKRKKISLADQILTALAVSRVGLLWALLLNWYLTELNPAFYSVELRITSYNAWVVTNHFSMWLAASLSIFYLLKIANFSNLSFLNLKRRVRSIILVILLGSLLFLVCHLLAVNMDENMWTEEYEGNMTGKMKLRNAAHLSYMTVTTLWSFIPFMLSLISFLMLIFSLCKHLKKMQLHGEGSRDPSTTVHIKALQTLISFLLLCAIFFLFLIISVWSPRRLQNEPVFMVCKAVGNIYLSFDSFVLIWRTKKLKHIFLLILCQIRC</sequence>